<sequence length="754" mass="84925">MRRSRFVAQVFSDVTFADASTISAPIFTMSTRAPYRGARGRGRGRGGRSFSDRPYNDDAGRDQFVTGDSHFQSVHDANFRFRHGEPYRQHQPPLDQRQQPPFNQNYEFRPPPPSRGQWQQFRQPNQFPSNQNYAACPPPPFYQNQMSRPPPQQSFRQRPRSKPSDYREWEYAKTPPSPGSEKFVVLSYNILADYLANDHWRSLYFHIPRNMLSWGWRKSKLVFELSLWSADIMCLQEVDKFQDLEEEMKHRGYSAIWKMRTGNAVDGCAIFWRSNRFKLVHEESIQFNQLGLRDNVAQICVLETLLTSHTKENETPPPESSAGSHRVVICNIHVLFNPKRGDFKLGQVRTLLDKAHAVSKLWDDAPIVLCGDFNCTPKSPLYNFISDRKLDLSGLARDKVSGQVSAEFRPPRPENYTTRYQSANKSPQGQVQPPNLITNAHMENNSNIDVGTAPSEKTSELPCGDTILAGHEATSSSDQVLPCENMASDCQFGIENRKPDDSGNLSTAEDLSSLTISDTEPQHASSAREDLNTDRSVSSGLSETEQTPEEICSSDQDISSSLSTKVDTFVAEMKLDGLKLDEPVVFAQDEESLGEDGETFLAKLHDNNENLSQKGELVSEVPLKWSSEALNSDKITYSPSSWTPMEIATATGDPERTTVEHALELKSTYSEVEGQANTRDENGEPVVTSYHRCFMGTVDYIWRSEGLQTVRVLAPIPKQAMQWTPGFPTPKWGSDHIALVSELAFCSSKTLPKS</sequence>
<feature type="chain" id="PRO_0000355049" description="Carbon catabolite repressor protein 4 homolog 6">
    <location>
        <begin position="1"/>
        <end position="754"/>
    </location>
</feature>
<feature type="region of interest" description="Disordered" evidence="3">
    <location>
        <begin position="34"/>
        <end position="65"/>
    </location>
</feature>
<feature type="region of interest" description="Disordered" evidence="3">
    <location>
        <begin position="85"/>
        <end position="176"/>
    </location>
</feature>
<feature type="region of interest" description="Disordered" evidence="3">
    <location>
        <begin position="404"/>
        <end position="431"/>
    </location>
</feature>
<feature type="region of interest" description="Disordered" evidence="3">
    <location>
        <begin position="494"/>
        <end position="558"/>
    </location>
</feature>
<feature type="compositionally biased region" description="Basic and acidic residues" evidence="3">
    <location>
        <begin position="50"/>
        <end position="61"/>
    </location>
</feature>
<feature type="compositionally biased region" description="Polar residues" evidence="3">
    <location>
        <begin position="96"/>
        <end position="106"/>
    </location>
</feature>
<feature type="compositionally biased region" description="Polar residues" evidence="3">
    <location>
        <begin position="116"/>
        <end position="133"/>
    </location>
</feature>
<feature type="compositionally biased region" description="Basic and acidic residues" evidence="3">
    <location>
        <begin position="162"/>
        <end position="171"/>
    </location>
</feature>
<feature type="compositionally biased region" description="Polar residues" evidence="3">
    <location>
        <begin position="415"/>
        <end position="431"/>
    </location>
</feature>
<feature type="compositionally biased region" description="Polar residues" evidence="3">
    <location>
        <begin position="503"/>
        <end position="525"/>
    </location>
</feature>
<feature type="compositionally biased region" description="Polar residues" evidence="3">
    <location>
        <begin position="534"/>
        <end position="545"/>
    </location>
</feature>
<feature type="binding site" evidence="2">
    <location>
        <position position="237"/>
    </location>
    <ligand>
        <name>Mg(2+)</name>
        <dbReference type="ChEBI" id="CHEBI:18420"/>
    </ligand>
</feature>
<feature type="sequence conflict" description="In Ref. 3; AAN28916/AAL47464." evidence="4" ref="3">
    <original>G</original>
    <variation>R</variation>
    <location>
        <position position="291"/>
    </location>
</feature>
<protein>
    <recommendedName>
        <fullName>Carbon catabolite repressor protein 4 homolog 6</fullName>
        <shortName>CCR4 homolog 6</shortName>
        <ecNumber>3.1.13.4</ecNumber>
    </recommendedName>
</protein>
<comment type="function">
    <text evidence="1">Acts as a catalytic component of the CCR4-NOT core complex, which in the nucleus seems to be a general transcription factor, and in the cytoplasm the major mRNA deadenylase involved in mRNA turnover.</text>
</comment>
<comment type="catalytic activity">
    <reaction>
        <text>Exonucleolytic cleavage of poly(A) to 5'-AMP.</text>
        <dbReference type="EC" id="3.1.13.4"/>
    </reaction>
</comment>
<comment type="cofactor">
    <cofactor evidence="1">
        <name>Mg(2+)</name>
        <dbReference type="ChEBI" id="CHEBI:18420"/>
    </cofactor>
</comment>
<comment type="subunit">
    <text evidence="1">Component of the CCR4-NOT complex, at least composed of CRR4 and CAF1 proteins.</text>
</comment>
<comment type="subcellular location">
    <subcellularLocation>
        <location evidence="1">Nucleus</location>
    </subcellularLocation>
    <subcellularLocation>
        <location evidence="1">Cytoplasm</location>
    </subcellularLocation>
</comment>
<comment type="similarity">
    <text evidence="4">Belongs to the CCR4/nocturin family.</text>
</comment>
<comment type="sequence caution" evidence="4">
    <conflict type="erroneous gene model prediction">
        <sequence resource="EMBL-CDS" id="CAB96670"/>
    </conflict>
</comment>
<evidence type="ECO:0000250" key="1"/>
<evidence type="ECO:0000250" key="2">
    <source>
        <dbReference type="UniProtKB" id="O95551"/>
    </source>
</evidence>
<evidence type="ECO:0000256" key="3">
    <source>
        <dbReference type="SAM" id="MobiDB-lite"/>
    </source>
</evidence>
<evidence type="ECO:0000305" key="4"/>
<gene>
    <name type="primary">CCR4-6</name>
    <name type="ordered locus">At5g11350</name>
    <name type="ORF">F2I11_240</name>
</gene>
<accession>Q8VYU4</accession>
<accession>Q9LFM2</accession>
<keyword id="KW-0963">Cytoplasm</keyword>
<keyword id="KW-0269">Exonuclease</keyword>
<keyword id="KW-0378">Hydrolase</keyword>
<keyword id="KW-0460">Magnesium</keyword>
<keyword id="KW-0479">Metal-binding</keyword>
<keyword id="KW-0540">Nuclease</keyword>
<keyword id="KW-0539">Nucleus</keyword>
<keyword id="KW-1185">Reference proteome</keyword>
<keyword id="KW-0677">Repeat</keyword>
<keyword id="KW-0694">RNA-binding</keyword>
<keyword id="KW-0804">Transcription</keyword>
<keyword id="KW-0805">Transcription regulation</keyword>
<organism>
    <name type="scientific">Arabidopsis thaliana</name>
    <name type="common">Mouse-ear cress</name>
    <dbReference type="NCBI Taxonomy" id="3702"/>
    <lineage>
        <taxon>Eukaryota</taxon>
        <taxon>Viridiplantae</taxon>
        <taxon>Streptophyta</taxon>
        <taxon>Embryophyta</taxon>
        <taxon>Tracheophyta</taxon>
        <taxon>Spermatophyta</taxon>
        <taxon>Magnoliopsida</taxon>
        <taxon>eudicotyledons</taxon>
        <taxon>Gunneridae</taxon>
        <taxon>Pentapetalae</taxon>
        <taxon>rosids</taxon>
        <taxon>malvids</taxon>
        <taxon>Brassicales</taxon>
        <taxon>Brassicaceae</taxon>
        <taxon>Camelineae</taxon>
        <taxon>Arabidopsis</taxon>
    </lineage>
</organism>
<dbReference type="EC" id="3.1.13.4"/>
<dbReference type="EMBL" id="AL360314">
    <property type="protein sequence ID" value="CAB96670.1"/>
    <property type="status" value="ALT_SEQ"/>
    <property type="molecule type" value="Genomic_DNA"/>
</dbReference>
<dbReference type="EMBL" id="CP002688">
    <property type="protein sequence ID" value="AED91664.1"/>
    <property type="molecule type" value="Genomic_DNA"/>
</dbReference>
<dbReference type="EMBL" id="AY069916">
    <property type="protein sequence ID" value="AAL47464.1"/>
    <property type="molecule type" value="mRNA"/>
</dbReference>
<dbReference type="EMBL" id="AY143977">
    <property type="protein sequence ID" value="AAN28916.1"/>
    <property type="molecule type" value="mRNA"/>
</dbReference>
<dbReference type="RefSeq" id="NP_196696.2">
    <property type="nucleotide sequence ID" value="NM_121173.5"/>
</dbReference>
<dbReference type="SMR" id="Q8VYU4"/>
<dbReference type="FunCoup" id="Q8VYU4">
    <property type="interactions" value="3817"/>
</dbReference>
<dbReference type="iPTMnet" id="Q8VYU4"/>
<dbReference type="PaxDb" id="3702-AT5G11350.1"/>
<dbReference type="EnsemblPlants" id="AT5G11350.1">
    <property type="protein sequence ID" value="AT5G11350.1"/>
    <property type="gene ID" value="AT5G11350"/>
</dbReference>
<dbReference type="GeneID" id="831006"/>
<dbReference type="Gramene" id="AT5G11350.1">
    <property type="protein sequence ID" value="AT5G11350.1"/>
    <property type="gene ID" value="AT5G11350"/>
</dbReference>
<dbReference type="KEGG" id="ath:AT5G11350"/>
<dbReference type="Araport" id="AT5G11350"/>
<dbReference type="TAIR" id="AT5G11350">
    <property type="gene designation" value="CCR4F"/>
</dbReference>
<dbReference type="eggNOG" id="KOG2338">
    <property type="taxonomic scope" value="Eukaryota"/>
</dbReference>
<dbReference type="HOGENOM" id="CLU_008664_0_0_1"/>
<dbReference type="InParanoid" id="Q8VYU4"/>
<dbReference type="PhylomeDB" id="Q8VYU4"/>
<dbReference type="PRO" id="PR:Q8VYU4"/>
<dbReference type="Proteomes" id="UP000006548">
    <property type="component" value="Chromosome 5"/>
</dbReference>
<dbReference type="ExpressionAtlas" id="Q8VYU4">
    <property type="expression patterns" value="baseline and differential"/>
</dbReference>
<dbReference type="GO" id="GO:0005737">
    <property type="term" value="C:cytoplasm"/>
    <property type="evidence" value="ECO:0000314"/>
    <property type="project" value="TAIR"/>
</dbReference>
<dbReference type="GO" id="GO:0005634">
    <property type="term" value="C:nucleus"/>
    <property type="evidence" value="ECO:0007669"/>
    <property type="project" value="UniProtKB-SubCell"/>
</dbReference>
<dbReference type="GO" id="GO:0046872">
    <property type="term" value="F:metal ion binding"/>
    <property type="evidence" value="ECO:0007669"/>
    <property type="project" value="UniProtKB-KW"/>
</dbReference>
<dbReference type="GO" id="GO:0004535">
    <property type="term" value="F:poly(A)-specific ribonuclease activity"/>
    <property type="evidence" value="ECO:0007669"/>
    <property type="project" value="UniProtKB-EC"/>
</dbReference>
<dbReference type="GO" id="GO:0003723">
    <property type="term" value="F:RNA binding"/>
    <property type="evidence" value="ECO:0007669"/>
    <property type="project" value="UniProtKB-KW"/>
</dbReference>
<dbReference type="FunFam" id="3.60.10.10:FF:000086">
    <property type="entry name" value="Carbon catabolite repressor protein 4 homolog 6"/>
    <property type="match status" value="1"/>
</dbReference>
<dbReference type="Gene3D" id="3.60.10.10">
    <property type="entry name" value="Endonuclease/exonuclease/phosphatase"/>
    <property type="match status" value="2"/>
</dbReference>
<dbReference type="InterPro" id="IPR050410">
    <property type="entry name" value="CCR4/nocturin_mRNA_transcr"/>
</dbReference>
<dbReference type="InterPro" id="IPR036691">
    <property type="entry name" value="Endo/exonu/phosph_ase_sf"/>
</dbReference>
<dbReference type="InterPro" id="IPR005135">
    <property type="entry name" value="Endo/exonuclease/phosphatase"/>
</dbReference>
<dbReference type="PANTHER" id="PTHR12121">
    <property type="entry name" value="CARBON CATABOLITE REPRESSOR PROTEIN 4"/>
    <property type="match status" value="1"/>
</dbReference>
<dbReference type="PANTHER" id="PTHR12121:SF85">
    <property type="entry name" value="CARBON CATABOLITE REPRESSOR PROTEIN 4 HOMOLOG 6"/>
    <property type="match status" value="1"/>
</dbReference>
<dbReference type="Pfam" id="PF03372">
    <property type="entry name" value="Exo_endo_phos"/>
    <property type="match status" value="1"/>
</dbReference>
<dbReference type="SUPFAM" id="SSF56219">
    <property type="entry name" value="DNase I-like"/>
    <property type="match status" value="1"/>
</dbReference>
<reference key="1">
    <citation type="journal article" date="2000" name="Nature">
        <title>Sequence and analysis of chromosome 5 of the plant Arabidopsis thaliana.</title>
        <authorList>
            <person name="Tabata S."/>
            <person name="Kaneko T."/>
            <person name="Nakamura Y."/>
            <person name="Kotani H."/>
            <person name="Kato T."/>
            <person name="Asamizu E."/>
            <person name="Miyajima N."/>
            <person name="Sasamoto S."/>
            <person name="Kimura T."/>
            <person name="Hosouchi T."/>
            <person name="Kawashima K."/>
            <person name="Kohara M."/>
            <person name="Matsumoto M."/>
            <person name="Matsuno A."/>
            <person name="Muraki A."/>
            <person name="Nakayama S."/>
            <person name="Nakazaki N."/>
            <person name="Naruo K."/>
            <person name="Okumura S."/>
            <person name="Shinpo S."/>
            <person name="Takeuchi C."/>
            <person name="Wada T."/>
            <person name="Watanabe A."/>
            <person name="Yamada M."/>
            <person name="Yasuda M."/>
            <person name="Sato S."/>
            <person name="de la Bastide M."/>
            <person name="Huang E."/>
            <person name="Spiegel L."/>
            <person name="Gnoj L."/>
            <person name="O'Shaughnessy A."/>
            <person name="Preston R."/>
            <person name="Habermann K."/>
            <person name="Murray J."/>
            <person name="Johnson D."/>
            <person name="Rohlfing T."/>
            <person name="Nelson J."/>
            <person name="Stoneking T."/>
            <person name="Pepin K."/>
            <person name="Spieth J."/>
            <person name="Sekhon M."/>
            <person name="Armstrong J."/>
            <person name="Becker M."/>
            <person name="Belter E."/>
            <person name="Cordum H."/>
            <person name="Cordes M."/>
            <person name="Courtney L."/>
            <person name="Courtney W."/>
            <person name="Dante M."/>
            <person name="Du H."/>
            <person name="Edwards J."/>
            <person name="Fryman J."/>
            <person name="Haakensen B."/>
            <person name="Lamar E."/>
            <person name="Latreille P."/>
            <person name="Leonard S."/>
            <person name="Meyer R."/>
            <person name="Mulvaney E."/>
            <person name="Ozersky P."/>
            <person name="Riley A."/>
            <person name="Strowmatt C."/>
            <person name="Wagner-McPherson C."/>
            <person name="Wollam A."/>
            <person name="Yoakum M."/>
            <person name="Bell M."/>
            <person name="Dedhia N."/>
            <person name="Parnell L."/>
            <person name="Shah R."/>
            <person name="Rodriguez M."/>
            <person name="Hoon See L."/>
            <person name="Vil D."/>
            <person name="Baker J."/>
            <person name="Kirchoff K."/>
            <person name="Toth K."/>
            <person name="King L."/>
            <person name="Bahret A."/>
            <person name="Miller B."/>
            <person name="Marra M.A."/>
            <person name="Martienssen R."/>
            <person name="McCombie W.R."/>
            <person name="Wilson R.K."/>
            <person name="Murphy G."/>
            <person name="Bancroft I."/>
            <person name="Volckaert G."/>
            <person name="Wambutt R."/>
            <person name="Duesterhoeft A."/>
            <person name="Stiekema W."/>
            <person name="Pohl T."/>
            <person name="Entian K.-D."/>
            <person name="Terryn N."/>
            <person name="Hartley N."/>
            <person name="Bent E."/>
            <person name="Johnson S."/>
            <person name="Langham S.-A."/>
            <person name="McCullagh B."/>
            <person name="Robben J."/>
            <person name="Grymonprez B."/>
            <person name="Zimmermann W."/>
            <person name="Ramsperger U."/>
            <person name="Wedler H."/>
            <person name="Balke K."/>
            <person name="Wedler E."/>
            <person name="Peters S."/>
            <person name="van Staveren M."/>
            <person name="Dirkse W."/>
            <person name="Mooijman P."/>
            <person name="Klein Lankhorst R."/>
            <person name="Weitzenegger T."/>
            <person name="Bothe G."/>
            <person name="Rose M."/>
            <person name="Hauf J."/>
            <person name="Berneiser S."/>
            <person name="Hempel S."/>
            <person name="Feldpausch M."/>
            <person name="Lamberth S."/>
            <person name="Villarroel R."/>
            <person name="Gielen J."/>
            <person name="Ardiles W."/>
            <person name="Bents O."/>
            <person name="Lemcke K."/>
            <person name="Kolesov G."/>
            <person name="Mayer K.F.X."/>
            <person name="Rudd S."/>
            <person name="Schoof H."/>
            <person name="Schueller C."/>
            <person name="Zaccaria P."/>
            <person name="Mewes H.-W."/>
            <person name="Bevan M."/>
            <person name="Fransz P.F."/>
        </authorList>
    </citation>
    <scope>NUCLEOTIDE SEQUENCE [LARGE SCALE GENOMIC DNA]</scope>
    <source>
        <strain>cv. Columbia</strain>
    </source>
</reference>
<reference key="2">
    <citation type="journal article" date="2017" name="Plant J.">
        <title>Araport11: a complete reannotation of the Arabidopsis thaliana reference genome.</title>
        <authorList>
            <person name="Cheng C.Y."/>
            <person name="Krishnakumar V."/>
            <person name="Chan A.P."/>
            <person name="Thibaud-Nissen F."/>
            <person name="Schobel S."/>
            <person name="Town C.D."/>
        </authorList>
    </citation>
    <scope>GENOME REANNOTATION</scope>
    <source>
        <strain>cv. Columbia</strain>
    </source>
</reference>
<reference key="3">
    <citation type="journal article" date="2003" name="Science">
        <title>Empirical analysis of transcriptional activity in the Arabidopsis genome.</title>
        <authorList>
            <person name="Yamada K."/>
            <person name="Lim J."/>
            <person name="Dale J.M."/>
            <person name="Chen H."/>
            <person name="Shinn P."/>
            <person name="Palm C.J."/>
            <person name="Southwick A.M."/>
            <person name="Wu H.C."/>
            <person name="Kim C.J."/>
            <person name="Nguyen M."/>
            <person name="Pham P.K."/>
            <person name="Cheuk R.F."/>
            <person name="Karlin-Newmann G."/>
            <person name="Liu S.X."/>
            <person name="Lam B."/>
            <person name="Sakano H."/>
            <person name="Wu T."/>
            <person name="Yu G."/>
            <person name="Miranda M."/>
            <person name="Quach H.L."/>
            <person name="Tripp M."/>
            <person name="Chang C.H."/>
            <person name="Lee J.M."/>
            <person name="Toriumi M.J."/>
            <person name="Chan M.M."/>
            <person name="Tang C.C."/>
            <person name="Onodera C.S."/>
            <person name="Deng J.M."/>
            <person name="Akiyama K."/>
            <person name="Ansari Y."/>
            <person name="Arakawa T."/>
            <person name="Banh J."/>
            <person name="Banno F."/>
            <person name="Bowser L."/>
            <person name="Brooks S.Y."/>
            <person name="Carninci P."/>
            <person name="Chao Q."/>
            <person name="Choy N."/>
            <person name="Enju A."/>
            <person name="Goldsmith A.D."/>
            <person name="Gurjal M."/>
            <person name="Hansen N.F."/>
            <person name="Hayashizaki Y."/>
            <person name="Johnson-Hopson C."/>
            <person name="Hsuan V.W."/>
            <person name="Iida K."/>
            <person name="Karnes M."/>
            <person name="Khan S."/>
            <person name="Koesema E."/>
            <person name="Ishida J."/>
            <person name="Jiang P.X."/>
            <person name="Jones T."/>
            <person name="Kawai J."/>
            <person name="Kamiya A."/>
            <person name="Meyers C."/>
            <person name="Nakajima M."/>
            <person name="Narusaka M."/>
            <person name="Seki M."/>
            <person name="Sakurai T."/>
            <person name="Satou M."/>
            <person name="Tamse R."/>
            <person name="Vaysberg M."/>
            <person name="Wallender E.K."/>
            <person name="Wong C."/>
            <person name="Yamamura Y."/>
            <person name="Yuan S."/>
            <person name="Shinozaki K."/>
            <person name="Davis R.W."/>
            <person name="Theologis A."/>
            <person name="Ecker J.R."/>
        </authorList>
    </citation>
    <scope>NUCLEOTIDE SEQUENCE [LARGE SCALE MRNA]</scope>
    <source>
        <strain>cv. Columbia</strain>
    </source>
</reference>
<proteinExistence type="evidence at transcript level"/>
<name>CCR4F_ARATH</name>